<protein>
    <recommendedName>
        <fullName>Uncharacterized protein YJL043W</fullName>
    </recommendedName>
</protein>
<feature type="chain" id="PRO_0000203067" description="Uncharacterized protein YJL043W">
    <location>
        <begin position="1"/>
        <end position="257"/>
    </location>
</feature>
<feature type="sequence conflict" description="In Ref. 3; AAT92683." evidence="1" ref="3">
    <original>T</original>
    <variation>M</variation>
    <location>
        <position position="251"/>
    </location>
</feature>
<sequence>MFVDYSGLERYTDINASFGKLVNTYCCFQRCEAISEQLEILKSLVPKCHDIVALTDEDFASGRTAGLTQKLFAMAMTLHQITDCIDLLQKCNTIIPIEIANPASFESGAATAPLRQSYARLLDDWSHYMGPSTVKHTGCTNRPKWRFPWQQSRTIIIPMLFIGETAMSTRDLRSVLHDCEIRHASEMPLQLLWTSSPELVYATPHVDDYDIWSRYGSDYNMQIEDEDEASKGRQRKCVVQLEALLGALPTTDPLFQW</sequence>
<organism>
    <name type="scientific">Saccharomyces cerevisiae (strain ATCC 204508 / S288c)</name>
    <name type="common">Baker's yeast</name>
    <dbReference type="NCBI Taxonomy" id="559292"/>
    <lineage>
        <taxon>Eukaryota</taxon>
        <taxon>Fungi</taxon>
        <taxon>Dikarya</taxon>
        <taxon>Ascomycota</taxon>
        <taxon>Saccharomycotina</taxon>
        <taxon>Saccharomycetes</taxon>
        <taxon>Saccharomycetales</taxon>
        <taxon>Saccharomycetaceae</taxon>
        <taxon>Saccharomyces</taxon>
    </lineage>
</organism>
<name>YJE3_YEAST</name>
<evidence type="ECO:0000305" key="1"/>
<dbReference type="EMBL" id="Z49318">
    <property type="protein sequence ID" value="CAA89334.1"/>
    <property type="molecule type" value="Genomic_DNA"/>
</dbReference>
<dbReference type="EMBL" id="AY692664">
    <property type="protein sequence ID" value="AAT92683.1"/>
    <property type="molecule type" value="Genomic_DNA"/>
</dbReference>
<dbReference type="EMBL" id="BK006943">
    <property type="protein sequence ID" value="DAA08757.1"/>
    <property type="molecule type" value="Genomic_DNA"/>
</dbReference>
<dbReference type="PIR" id="S56815">
    <property type="entry name" value="S56815"/>
</dbReference>
<dbReference type="RefSeq" id="NP_012492.1">
    <property type="nucleotide sequence ID" value="NM_001181476.1"/>
</dbReference>
<dbReference type="BioGRID" id="33715">
    <property type="interactions" value="40"/>
</dbReference>
<dbReference type="DIP" id="DIP-2107N"/>
<dbReference type="FunCoup" id="P47053">
    <property type="interactions" value="40"/>
</dbReference>
<dbReference type="IntAct" id="P47053">
    <property type="interactions" value="3"/>
</dbReference>
<dbReference type="STRING" id="4932.YJL043W"/>
<dbReference type="iPTMnet" id="P47053"/>
<dbReference type="PaxDb" id="4932-YJL043W"/>
<dbReference type="EnsemblFungi" id="YJL043W_mRNA">
    <property type="protein sequence ID" value="YJL043W"/>
    <property type="gene ID" value="YJL043W"/>
</dbReference>
<dbReference type="GeneID" id="853407"/>
<dbReference type="KEGG" id="sce:YJL043W"/>
<dbReference type="AGR" id="SGD:S000003579"/>
<dbReference type="SGD" id="S000003579">
    <property type="gene designation" value="YJL043W"/>
</dbReference>
<dbReference type="VEuPathDB" id="FungiDB:YJL043W"/>
<dbReference type="HOGENOM" id="CLU_1042642_0_0_1"/>
<dbReference type="InParanoid" id="P47053"/>
<dbReference type="OMA" id="ASGRTAX"/>
<dbReference type="OrthoDB" id="4065251at2759"/>
<dbReference type="BioCyc" id="YEAST:G3O-31508-MONOMER"/>
<dbReference type="BioGRID-ORCS" id="853407">
    <property type="hits" value="6 hits in 10 CRISPR screens"/>
</dbReference>
<dbReference type="PRO" id="PR:P47053"/>
<dbReference type="Proteomes" id="UP000002311">
    <property type="component" value="Chromosome X"/>
</dbReference>
<dbReference type="RNAct" id="P47053">
    <property type="molecule type" value="protein"/>
</dbReference>
<dbReference type="GO" id="GO:0005737">
    <property type="term" value="C:cytoplasm"/>
    <property type="evidence" value="ECO:0007005"/>
    <property type="project" value="SGD"/>
</dbReference>
<dbReference type="GO" id="GO:0005739">
    <property type="term" value="C:mitochondrion"/>
    <property type="evidence" value="ECO:0007005"/>
    <property type="project" value="SGD"/>
</dbReference>
<proteinExistence type="predicted"/>
<gene>
    <name type="ordered locus">YJL043W</name>
    <name type="ORF">J1204</name>
</gene>
<comment type="similarity">
    <text evidence="1">To yeast YKR015c.</text>
</comment>
<accession>P47053</accession>
<accession>D6VWE1</accession>
<accession>Q6B2R6</accession>
<reference key="1">
    <citation type="journal article" date="1996" name="EMBO J.">
        <title>Complete nucleotide sequence of Saccharomyces cerevisiae chromosome X.</title>
        <authorList>
            <person name="Galibert F."/>
            <person name="Alexandraki D."/>
            <person name="Baur A."/>
            <person name="Boles E."/>
            <person name="Chalwatzis N."/>
            <person name="Chuat J.-C."/>
            <person name="Coster F."/>
            <person name="Cziepluch C."/>
            <person name="de Haan M."/>
            <person name="Domdey H."/>
            <person name="Durand P."/>
            <person name="Entian K.-D."/>
            <person name="Gatius M."/>
            <person name="Goffeau A."/>
            <person name="Grivell L.A."/>
            <person name="Hennemann A."/>
            <person name="Herbert C.J."/>
            <person name="Heumann K."/>
            <person name="Hilger F."/>
            <person name="Hollenberg C.P."/>
            <person name="Huang M.-E."/>
            <person name="Jacq C."/>
            <person name="Jauniaux J.-C."/>
            <person name="Katsoulou C."/>
            <person name="Kirchrath L."/>
            <person name="Kleine K."/>
            <person name="Kordes E."/>
            <person name="Koetter P."/>
            <person name="Liebl S."/>
            <person name="Louis E.J."/>
            <person name="Manus V."/>
            <person name="Mewes H.-W."/>
            <person name="Miosga T."/>
            <person name="Obermaier B."/>
            <person name="Perea J."/>
            <person name="Pohl T.M."/>
            <person name="Portetelle D."/>
            <person name="Pujol A."/>
            <person name="Purnelle B."/>
            <person name="Ramezani Rad M."/>
            <person name="Rasmussen S.W."/>
            <person name="Rose M."/>
            <person name="Rossau R."/>
            <person name="Schaaff-Gerstenschlaeger I."/>
            <person name="Smits P.H.M."/>
            <person name="Scarcez T."/>
            <person name="Soriano N."/>
            <person name="To Van D."/>
            <person name="Tzermia M."/>
            <person name="Van Broekhoven A."/>
            <person name="Vandenbol M."/>
            <person name="Wedler H."/>
            <person name="von Wettstein D."/>
            <person name="Wambutt R."/>
            <person name="Zagulski M."/>
            <person name="Zollner A."/>
            <person name="Karpfinger-Hartl L."/>
        </authorList>
    </citation>
    <scope>NUCLEOTIDE SEQUENCE [LARGE SCALE GENOMIC DNA]</scope>
    <source>
        <strain>ATCC 204508 / S288c</strain>
    </source>
</reference>
<reference key="2">
    <citation type="journal article" date="2014" name="G3 (Bethesda)">
        <title>The reference genome sequence of Saccharomyces cerevisiae: Then and now.</title>
        <authorList>
            <person name="Engel S.R."/>
            <person name="Dietrich F.S."/>
            <person name="Fisk D.G."/>
            <person name="Binkley G."/>
            <person name="Balakrishnan R."/>
            <person name="Costanzo M.C."/>
            <person name="Dwight S.S."/>
            <person name="Hitz B.C."/>
            <person name="Karra K."/>
            <person name="Nash R.S."/>
            <person name="Weng S."/>
            <person name="Wong E.D."/>
            <person name="Lloyd P."/>
            <person name="Skrzypek M.S."/>
            <person name="Miyasato S.R."/>
            <person name="Simison M."/>
            <person name="Cherry J.M."/>
        </authorList>
    </citation>
    <scope>GENOME REANNOTATION</scope>
    <source>
        <strain>ATCC 204508 / S288c</strain>
    </source>
</reference>
<reference key="3">
    <citation type="journal article" date="2007" name="Genome Res.">
        <title>Approaching a complete repository of sequence-verified protein-encoding clones for Saccharomyces cerevisiae.</title>
        <authorList>
            <person name="Hu Y."/>
            <person name="Rolfs A."/>
            <person name="Bhullar B."/>
            <person name="Murthy T.V.S."/>
            <person name="Zhu C."/>
            <person name="Berger M.F."/>
            <person name="Camargo A.A."/>
            <person name="Kelley F."/>
            <person name="McCarron S."/>
            <person name="Jepson D."/>
            <person name="Richardson A."/>
            <person name="Raphael J."/>
            <person name="Moreira D."/>
            <person name="Taycher E."/>
            <person name="Zuo D."/>
            <person name="Mohr S."/>
            <person name="Kane M.F."/>
            <person name="Williamson J."/>
            <person name="Simpson A.J.G."/>
            <person name="Bulyk M.L."/>
            <person name="Harlow E."/>
            <person name="Marsischky G."/>
            <person name="Kolodner R.D."/>
            <person name="LaBaer J."/>
        </authorList>
    </citation>
    <scope>NUCLEOTIDE SEQUENCE [GENOMIC DNA]</scope>
    <source>
        <strain>ATCC 204508 / S288c</strain>
    </source>
</reference>
<keyword id="KW-1185">Reference proteome</keyword>